<gene>
    <name evidence="6" type="primary">GDPDL7</name>
    <name evidence="5" type="synonym">GDPL6</name>
    <name evidence="5" type="synonym">SVL5</name>
    <name evidence="8" type="ordered locus">At5g58170</name>
    <name evidence="9" type="ORF">MCK7.4</name>
</gene>
<reference key="1">
    <citation type="journal article" date="2000" name="DNA Res.">
        <title>Structural analysis of Arabidopsis thaliana chromosome 5. X. Sequence features of the regions of 3,076,755 bp covered by sixty P1 and TAC clones.</title>
        <authorList>
            <person name="Sato S."/>
            <person name="Nakamura Y."/>
            <person name="Kaneko T."/>
            <person name="Katoh T."/>
            <person name="Asamizu E."/>
            <person name="Kotani H."/>
            <person name="Tabata S."/>
        </authorList>
    </citation>
    <scope>NUCLEOTIDE SEQUENCE [LARGE SCALE GENOMIC DNA]</scope>
    <source>
        <strain>cv. Columbia</strain>
    </source>
</reference>
<reference key="2">
    <citation type="journal article" date="2017" name="Plant J.">
        <title>Araport11: a complete reannotation of the Arabidopsis thaliana reference genome.</title>
        <authorList>
            <person name="Cheng C.Y."/>
            <person name="Krishnakumar V."/>
            <person name="Chan A.P."/>
            <person name="Thibaud-Nissen F."/>
            <person name="Schobel S."/>
            <person name="Town C.D."/>
        </authorList>
    </citation>
    <scope>GENOME REANNOTATION</scope>
    <source>
        <strain>cv. Columbia</strain>
    </source>
</reference>
<reference key="3">
    <citation type="journal article" date="2002" name="Science">
        <title>Functional annotation of a full-length Arabidopsis cDNA collection.</title>
        <authorList>
            <person name="Seki M."/>
            <person name="Narusaka M."/>
            <person name="Kamiya A."/>
            <person name="Ishida J."/>
            <person name="Satou M."/>
            <person name="Sakurai T."/>
            <person name="Nakajima M."/>
            <person name="Enju A."/>
            <person name="Akiyama K."/>
            <person name="Oono Y."/>
            <person name="Muramatsu M."/>
            <person name="Hayashizaki Y."/>
            <person name="Kawai J."/>
            <person name="Carninci P."/>
            <person name="Itoh M."/>
            <person name="Ishii Y."/>
            <person name="Arakawa T."/>
            <person name="Shibata K."/>
            <person name="Shinagawa A."/>
            <person name="Shinozaki K."/>
        </authorList>
    </citation>
    <scope>NUCLEOTIDE SEQUENCE [LARGE SCALE MRNA] OF 392-750</scope>
    <source>
        <strain>cv. Columbia</strain>
    </source>
</reference>
<reference key="4">
    <citation type="journal article" date="2008" name="Plant Cell Physiol.">
        <title>The glycerophosphoryl diester phosphodiesterase-like proteins SHV3 and its homologs play important roles in cell wall organization.</title>
        <authorList>
            <person name="Hayashi S."/>
            <person name="Ishii T."/>
            <person name="Matsunaga T."/>
            <person name="Tominaga R."/>
            <person name="Kuromori T."/>
            <person name="Wada T."/>
            <person name="Shinozaki K."/>
            <person name="Hirayama T."/>
        </authorList>
    </citation>
    <scope>TISSUE SPECIFICITY</scope>
</reference>
<reference key="5">
    <citation type="journal article" date="2011" name="Plant J.">
        <title>Characterization of the Arabidopsis glycerophosphodiester phosphodiesterase (GDPD) family reveals a role of the plastid-localized AtGDPD1 in maintaining cellular phosphate homeostasis under phosphate starvation.</title>
        <authorList>
            <person name="Cheng Y."/>
            <person name="Zhou W."/>
            <person name="El Sheery N.I."/>
            <person name="Peters C."/>
            <person name="Li M."/>
            <person name="Wang X."/>
            <person name="Huang J."/>
        </authorList>
    </citation>
    <scope>TISSUE SPECIFICITY</scope>
    <scope>GENE FAMILY</scope>
    <scope>NOMENCLATURE</scope>
</reference>
<dbReference type="EC" id="3.1.4.46" evidence="1"/>
<dbReference type="EMBL" id="AB019228">
    <property type="protein sequence ID" value="BAA96908.1"/>
    <property type="molecule type" value="Genomic_DNA"/>
</dbReference>
<dbReference type="EMBL" id="CP002688">
    <property type="protein sequence ID" value="AED97007.1"/>
    <property type="molecule type" value="Genomic_DNA"/>
</dbReference>
<dbReference type="EMBL" id="AK118200">
    <property type="protein sequence ID" value="BAC42822.1"/>
    <property type="molecule type" value="mRNA"/>
</dbReference>
<dbReference type="RefSeq" id="NP_200625.1">
    <property type="nucleotide sequence ID" value="NM_125202.2"/>
</dbReference>
<dbReference type="SMR" id="Q9LVN0"/>
<dbReference type="BioGRID" id="21173">
    <property type="interactions" value="1"/>
</dbReference>
<dbReference type="FunCoup" id="Q9LVN0">
    <property type="interactions" value="52"/>
</dbReference>
<dbReference type="STRING" id="3702.Q9LVN0"/>
<dbReference type="GlyCosmos" id="Q9LVN0">
    <property type="glycosylation" value="4 sites, No reported glycans"/>
</dbReference>
<dbReference type="GlyGen" id="Q9LVN0">
    <property type="glycosylation" value="4 sites"/>
</dbReference>
<dbReference type="PaxDb" id="3702-AT5G58170.1"/>
<dbReference type="ProteomicsDB" id="248506"/>
<dbReference type="EnsemblPlants" id="AT5G58170.1">
    <property type="protein sequence ID" value="AT5G58170.1"/>
    <property type="gene ID" value="AT5G58170"/>
</dbReference>
<dbReference type="GeneID" id="835929"/>
<dbReference type="Gramene" id="AT5G58170.1">
    <property type="protein sequence ID" value="AT5G58170.1"/>
    <property type="gene ID" value="AT5G58170"/>
</dbReference>
<dbReference type="KEGG" id="ath:AT5G58170"/>
<dbReference type="Araport" id="AT5G58170"/>
<dbReference type="TAIR" id="AT5G58170">
    <property type="gene designation" value="SVL5"/>
</dbReference>
<dbReference type="eggNOG" id="KOG2258">
    <property type="taxonomic scope" value="Eukaryota"/>
</dbReference>
<dbReference type="HOGENOM" id="CLU_010414_0_1_1"/>
<dbReference type="InParanoid" id="Q9LVN0"/>
<dbReference type="OMA" id="DYIWPTD"/>
<dbReference type="OrthoDB" id="1058301at2759"/>
<dbReference type="PhylomeDB" id="Q9LVN0"/>
<dbReference type="PRO" id="PR:Q9LVN0"/>
<dbReference type="Proteomes" id="UP000006548">
    <property type="component" value="Chromosome 5"/>
</dbReference>
<dbReference type="ExpressionAtlas" id="Q9LVN0">
    <property type="expression patterns" value="baseline and differential"/>
</dbReference>
<dbReference type="GO" id="GO:0008889">
    <property type="term" value="F:glycerophosphodiester phosphodiesterase activity"/>
    <property type="evidence" value="ECO:0007669"/>
    <property type="project" value="UniProtKB-EC"/>
</dbReference>
<dbReference type="GO" id="GO:0006071">
    <property type="term" value="P:glycerol metabolic process"/>
    <property type="evidence" value="ECO:0007669"/>
    <property type="project" value="UniProtKB-KW"/>
</dbReference>
<dbReference type="GO" id="GO:0006629">
    <property type="term" value="P:lipid metabolic process"/>
    <property type="evidence" value="ECO:0007669"/>
    <property type="project" value="InterPro"/>
</dbReference>
<dbReference type="CDD" id="cd08603">
    <property type="entry name" value="GDPD_SHV3_repeat_1"/>
    <property type="match status" value="1"/>
</dbReference>
<dbReference type="CDD" id="cd08604">
    <property type="entry name" value="GDPD_SHV3_repeat_2"/>
    <property type="match status" value="1"/>
</dbReference>
<dbReference type="FunFam" id="3.20.20.190:FF:000011">
    <property type="entry name" value="Glycerophosphodiester phosphodiesterase GDPDL3"/>
    <property type="match status" value="1"/>
</dbReference>
<dbReference type="FunFam" id="3.20.20.190:FF:000013">
    <property type="entry name" value="Glycerophosphodiester phosphodiesterase GDPDL3"/>
    <property type="match status" value="1"/>
</dbReference>
<dbReference type="Gene3D" id="3.20.20.190">
    <property type="entry name" value="Phosphatidylinositol (PI) phosphodiesterase"/>
    <property type="match status" value="2"/>
</dbReference>
<dbReference type="InterPro" id="IPR030395">
    <property type="entry name" value="GP_PDE_dom"/>
</dbReference>
<dbReference type="InterPro" id="IPR017946">
    <property type="entry name" value="PLC-like_Pdiesterase_TIM-brl"/>
</dbReference>
<dbReference type="PANTHER" id="PTHR43620:SF44">
    <property type="entry name" value="GLYCEROPHOSPHODIESTER PHOSPHODIESTERASE GDPDL6-RELATED"/>
    <property type="match status" value="1"/>
</dbReference>
<dbReference type="PANTHER" id="PTHR43620">
    <property type="entry name" value="GLYCEROPHOSPHORYL DIESTER PHOSPHODIESTERASE"/>
    <property type="match status" value="1"/>
</dbReference>
<dbReference type="Pfam" id="PF03009">
    <property type="entry name" value="GDPD"/>
    <property type="match status" value="1"/>
</dbReference>
<dbReference type="SUPFAM" id="SSF51695">
    <property type="entry name" value="PLC-like phosphodiesterases"/>
    <property type="match status" value="2"/>
</dbReference>
<dbReference type="PROSITE" id="PS51704">
    <property type="entry name" value="GP_PDE"/>
    <property type="match status" value="2"/>
</dbReference>
<evidence type="ECO:0000250" key="1">
    <source>
        <dbReference type="UniProtKB" id="Q7Y208"/>
    </source>
</evidence>
<evidence type="ECO:0000255" key="2"/>
<evidence type="ECO:0000255" key="3">
    <source>
        <dbReference type="PROSITE-ProRule" id="PRU00498"/>
    </source>
</evidence>
<evidence type="ECO:0000269" key="4">
    <source>
    </source>
</evidence>
<evidence type="ECO:0000303" key="5">
    <source>
    </source>
</evidence>
<evidence type="ECO:0000303" key="6">
    <source>
    </source>
</evidence>
<evidence type="ECO:0000305" key="7"/>
<evidence type="ECO:0000312" key="8">
    <source>
        <dbReference type="Araport" id="AT5G58170"/>
    </source>
</evidence>
<evidence type="ECO:0000312" key="9">
    <source>
        <dbReference type="EMBL" id="BAA96908.1"/>
    </source>
</evidence>
<feature type="signal peptide" evidence="2">
    <location>
        <begin position="1"/>
        <end position="17"/>
    </location>
</feature>
<feature type="chain" id="PRO_0000430617" description="Glycerophosphodiester phosphodiesterase GDPDL7" evidence="2">
    <location>
        <begin position="18"/>
        <end position="750"/>
    </location>
</feature>
<feature type="domain" description="GP-PDE 1" evidence="2">
    <location>
        <begin position="41"/>
        <end position="339"/>
    </location>
</feature>
<feature type="domain" description="GP-PDE 2" evidence="2">
    <location>
        <begin position="355"/>
        <end position="654"/>
    </location>
</feature>
<feature type="glycosylation site" description="N-linked (GlcNAc...) asparagine" evidence="3">
    <location>
        <position position="134"/>
    </location>
</feature>
<feature type="glycosylation site" description="N-linked (GlcNAc...) asparagine" evidence="3">
    <location>
        <position position="304"/>
    </location>
</feature>
<feature type="glycosylation site" description="N-linked (GlcNAc...) asparagine" evidence="3">
    <location>
        <position position="603"/>
    </location>
</feature>
<feature type="glycosylation site" description="N-linked (GlcNAc...) asparagine" evidence="3">
    <location>
        <position position="716"/>
    </location>
</feature>
<feature type="sequence conflict" description="In Ref. 3; BAC42822." ref="3">
    <original>L</original>
    <variation>I</variation>
    <location>
        <position position="504"/>
    </location>
</feature>
<proteinExistence type="evidence at transcript level"/>
<protein>
    <recommendedName>
        <fullName evidence="7">Glycerophosphodiester phosphodiesterase GDPDL7</fullName>
        <ecNumber evidence="1">3.1.4.46</ecNumber>
    </recommendedName>
    <alternativeName>
        <fullName evidence="6">Glycerophosphodiester phosphodiesterase-like 7</fullName>
        <shortName evidence="6">ATGDPDL7</shortName>
    </alternativeName>
    <alternativeName>
        <fullName evidence="5">Glycerophosphodiesterase-like 6</fullName>
    </alternativeName>
    <alternativeName>
        <fullName evidence="5">Protein SHV3-LIKE 5</fullName>
    </alternativeName>
</protein>
<accession>Q9LVN0</accession>
<accession>Q8GXJ8</accession>
<sequence>MLRFIIFFSLFIHLCVAAPQTPAAAAAVPAKKWLTLNGQEPAVVARGGFSGLFPESSASANDLAIGTSSPGLTMLCNLQMTKDGVGLCLSDIILDNATTISSVFPKAQKTYKVNGQDLKGWFVLDYDADTIFNNVTLVQNIFSRPSIFDGQMSVSAVEDVLGTKPPKFWLSVQYDAFYMEHKLSPAEYLRSLQFRGINVISSPEIGFLKSIGMDAGRAKTKLIFEFKDPEAVEPTTNKKYSEIQQNLAAIKAFASGVLVPKDYIWPIDSAKYLKPATTFVADAHKAGLEVYASGFANDLRTSFNYSYDPSAEYLQFVDNGQFSVDGVITDFPPTASQSITCFSHQNGNLPKAGHALVITHNGASGDYPGCTDLAYQKAVDDGADVIDCSVQMSKDGIAFCHDAADLTASTTAMTIFMSRATSVPEIQPTNGIFSFDLTWAEIQSVKPQIENPFTATGFQRNPANKNAGKFITLADFLDFSKAKAVTGVMINIENAAYLASKKGLGVVDAVKSALAKSTLDKQSTQKVLIQSDDSSVLASFEAVPPYTRVLSIDKEIGGAPKPSVDEIKKYAEAVNLLRTSLVTVSQSFTTGKTNVVEEMHKGNISVYVSVLRNEYISVAFDYFSDPTIELATFISGSGVDGVITEFPATATRYLKSPCSDLNKEQPYAILPAEAGGLVVVADKEAQPPASAPNPPLEAKDVIDPPLPPVANLAASNATGGAQSHPPPASGTVANAANLGLSLLAMLALGV</sequence>
<comment type="catalytic activity">
    <reaction evidence="1">
        <text>a sn-glycero-3-phosphodiester + H2O = an alcohol + sn-glycerol 3-phosphate + H(+)</text>
        <dbReference type="Rhea" id="RHEA:12969"/>
        <dbReference type="ChEBI" id="CHEBI:15377"/>
        <dbReference type="ChEBI" id="CHEBI:15378"/>
        <dbReference type="ChEBI" id="CHEBI:30879"/>
        <dbReference type="ChEBI" id="CHEBI:57597"/>
        <dbReference type="ChEBI" id="CHEBI:83408"/>
        <dbReference type="EC" id="3.1.4.46"/>
    </reaction>
</comment>
<comment type="tissue specificity">
    <text evidence="4">Expressed in flowers and siliques.</text>
</comment>
<comment type="similarity">
    <text evidence="7">Belongs to the glycerophosphoryl diester phosphodiesterase family.</text>
</comment>
<organism>
    <name type="scientific">Arabidopsis thaliana</name>
    <name type="common">Mouse-ear cress</name>
    <dbReference type="NCBI Taxonomy" id="3702"/>
    <lineage>
        <taxon>Eukaryota</taxon>
        <taxon>Viridiplantae</taxon>
        <taxon>Streptophyta</taxon>
        <taxon>Embryophyta</taxon>
        <taxon>Tracheophyta</taxon>
        <taxon>Spermatophyta</taxon>
        <taxon>Magnoliopsida</taxon>
        <taxon>eudicotyledons</taxon>
        <taxon>Gunneridae</taxon>
        <taxon>Pentapetalae</taxon>
        <taxon>rosids</taxon>
        <taxon>malvids</taxon>
        <taxon>Brassicales</taxon>
        <taxon>Brassicaceae</taxon>
        <taxon>Camelineae</taxon>
        <taxon>Arabidopsis</taxon>
    </lineage>
</organism>
<keyword id="KW-0319">Glycerol metabolism</keyword>
<keyword id="KW-0325">Glycoprotein</keyword>
<keyword id="KW-0378">Hydrolase</keyword>
<keyword id="KW-1185">Reference proteome</keyword>
<keyword id="KW-0732">Signal</keyword>
<name>GPDL7_ARATH</name>